<name>LIGB_ECO45</name>
<feature type="chain" id="PRO_1000147720" description="DNA ligase B">
    <location>
        <begin position="1"/>
        <end position="560"/>
    </location>
</feature>
<feature type="active site" description="N6-AMP-lysine intermediate" evidence="1">
    <location>
        <position position="124"/>
    </location>
</feature>
<dbReference type="EC" id="6.5.1.2" evidence="1"/>
<dbReference type="EMBL" id="CU928161">
    <property type="protein sequence ID" value="CAR05270.1"/>
    <property type="molecule type" value="Genomic_DNA"/>
</dbReference>
<dbReference type="RefSeq" id="WP_001363072.1">
    <property type="nucleotide sequence ID" value="NC_011742.1"/>
</dbReference>
<dbReference type="SMR" id="B7MFK8"/>
<dbReference type="KEGG" id="ecz:ECS88_4061"/>
<dbReference type="HOGENOM" id="CLU_489786_0_0_6"/>
<dbReference type="Proteomes" id="UP000000747">
    <property type="component" value="Chromosome"/>
</dbReference>
<dbReference type="GO" id="GO:0003911">
    <property type="term" value="F:DNA ligase (NAD+) activity"/>
    <property type="evidence" value="ECO:0007669"/>
    <property type="project" value="UniProtKB-UniRule"/>
</dbReference>
<dbReference type="GO" id="GO:0006281">
    <property type="term" value="P:DNA repair"/>
    <property type="evidence" value="ECO:0007669"/>
    <property type="project" value="UniProtKB-KW"/>
</dbReference>
<dbReference type="GO" id="GO:0006260">
    <property type="term" value="P:DNA replication"/>
    <property type="evidence" value="ECO:0007669"/>
    <property type="project" value="UniProtKB-KW"/>
</dbReference>
<dbReference type="FunFam" id="1.10.287.610:FF:000003">
    <property type="entry name" value="DNA ligase B"/>
    <property type="match status" value="1"/>
</dbReference>
<dbReference type="FunFam" id="2.40.50.140:FF:000139">
    <property type="entry name" value="DNA ligase B"/>
    <property type="match status" value="1"/>
</dbReference>
<dbReference type="FunFam" id="3.30.470.30:FF:000007">
    <property type="entry name" value="DNA ligase B"/>
    <property type="match status" value="1"/>
</dbReference>
<dbReference type="Gene3D" id="3.30.470.30">
    <property type="entry name" value="DNA ligase/mRNA capping enzyme"/>
    <property type="match status" value="1"/>
</dbReference>
<dbReference type="Gene3D" id="1.10.287.610">
    <property type="entry name" value="Helix hairpin bin"/>
    <property type="match status" value="1"/>
</dbReference>
<dbReference type="Gene3D" id="2.40.50.140">
    <property type="entry name" value="Nucleic acid-binding proteins"/>
    <property type="match status" value="1"/>
</dbReference>
<dbReference type="HAMAP" id="MF_01587">
    <property type="entry name" value="DNA_ligase_B"/>
    <property type="match status" value="1"/>
</dbReference>
<dbReference type="InterPro" id="IPR018239">
    <property type="entry name" value="DNA_ligase_AS"/>
</dbReference>
<dbReference type="InterPro" id="IPR020923">
    <property type="entry name" value="DNA_ligase_B"/>
</dbReference>
<dbReference type="InterPro" id="IPR033136">
    <property type="entry name" value="DNA_ligase_CS"/>
</dbReference>
<dbReference type="InterPro" id="IPR013839">
    <property type="entry name" value="DNAligase_adenylation"/>
</dbReference>
<dbReference type="InterPro" id="IPR013840">
    <property type="entry name" value="DNAligase_N"/>
</dbReference>
<dbReference type="InterPro" id="IPR012340">
    <property type="entry name" value="NA-bd_OB-fold"/>
</dbReference>
<dbReference type="InterPro" id="IPR050326">
    <property type="entry name" value="NAD_dep_DNA_ligaseB"/>
</dbReference>
<dbReference type="InterPro" id="IPR004150">
    <property type="entry name" value="NAD_DNA_ligase_OB"/>
</dbReference>
<dbReference type="InterPro" id="IPR010994">
    <property type="entry name" value="RuvA_2-like"/>
</dbReference>
<dbReference type="NCBIfam" id="NF005987">
    <property type="entry name" value="PRK08097.1"/>
    <property type="match status" value="1"/>
</dbReference>
<dbReference type="PANTHER" id="PTHR47810">
    <property type="entry name" value="DNA LIGASE"/>
    <property type="match status" value="1"/>
</dbReference>
<dbReference type="PANTHER" id="PTHR47810:SF1">
    <property type="entry name" value="DNA LIGASE B"/>
    <property type="match status" value="1"/>
</dbReference>
<dbReference type="Pfam" id="PF01653">
    <property type="entry name" value="DNA_ligase_aden"/>
    <property type="match status" value="1"/>
</dbReference>
<dbReference type="Pfam" id="PF03120">
    <property type="entry name" value="DNA_ligase_OB"/>
    <property type="match status" value="1"/>
</dbReference>
<dbReference type="SMART" id="SM00532">
    <property type="entry name" value="LIGANc"/>
    <property type="match status" value="1"/>
</dbReference>
<dbReference type="SUPFAM" id="SSF56091">
    <property type="entry name" value="DNA ligase/mRNA capping enzyme, catalytic domain"/>
    <property type="match status" value="1"/>
</dbReference>
<dbReference type="SUPFAM" id="SSF50249">
    <property type="entry name" value="Nucleic acid-binding proteins"/>
    <property type="match status" value="1"/>
</dbReference>
<dbReference type="SUPFAM" id="SSF47781">
    <property type="entry name" value="RuvA domain 2-like"/>
    <property type="match status" value="1"/>
</dbReference>
<dbReference type="PROSITE" id="PS01055">
    <property type="entry name" value="DNA_LIGASE_N1"/>
    <property type="match status" value="1"/>
</dbReference>
<dbReference type="PROSITE" id="PS01056">
    <property type="entry name" value="DNA_LIGASE_N2"/>
    <property type="match status" value="1"/>
</dbReference>
<proteinExistence type="inferred from homology"/>
<evidence type="ECO:0000255" key="1">
    <source>
        <dbReference type="HAMAP-Rule" id="MF_01587"/>
    </source>
</evidence>
<accession>B7MFK8</accession>
<gene>
    <name evidence="1" type="primary">ligB</name>
    <name type="ordered locus">ECS88_4061</name>
</gene>
<organism>
    <name type="scientific">Escherichia coli O45:K1 (strain S88 / ExPEC)</name>
    <dbReference type="NCBI Taxonomy" id="585035"/>
    <lineage>
        <taxon>Bacteria</taxon>
        <taxon>Pseudomonadati</taxon>
        <taxon>Pseudomonadota</taxon>
        <taxon>Gammaproteobacteria</taxon>
        <taxon>Enterobacterales</taxon>
        <taxon>Enterobacteriaceae</taxon>
        <taxon>Escherichia</taxon>
    </lineage>
</organism>
<keyword id="KW-0227">DNA damage</keyword>
<keyword id="KW-0234">DNA repair</keyword>
<keyword id="KW-0235">DNA replication</keyword>
<keyword id="KW-0436">Ligase</keyword>
<keyword id="KW-0520">NAD</keyword>
<keyword id="KW-1185">Reference proteome</keyword>
<sequence>MKVWMAILISILCWQSSAWAVCPAWSPARAQEEISRLQQQIKQWDDDYWKEGKSEVEDGVYDQLSARLTQWQRCFGNETRDVMMPPLNGAVMHPVAHTGVRKMADKNALSLWMRERSDLWVQPKVDGVAVTLVYRDGKLNKAISRGNGLKGEDWTQKVRLISAVPQTVSGPLANSTLQGEIFLQREGHIQQQMGGINARAKVAGLMMRQGNSDTLNSLAVFVWAWPDGPHLMTDRLKDLATAGFTLTQTYTRAVKNADEVAHVRNEWWKAKLPFVTDGVVVRAAKEPESRHWLPGQAEWLVAWKYQPVAQVAEVKAIQFAVGKSGKISVVASLAPVMLDDKKVQRVNIGSVRRWQEWDIAPGDQILVSLAGQGIPRIDDVVWRGAERTKPTPPENRFNSLTCYFASDVCQEQFISRLVWLGSKQVLGLDGIGEAGWRALHQTHRFEHIFSWLLLTPEQLQNTPGIAKSKSAQLWHQFNLARQQPFTRWVMAMGIPLTRAALNASDERSWSQLLFSTEQFWQQQPGTGSGRARQVIEWKENAQIKKLGSWLAAQQITGFEP</sequence>
<comment type="function">
    <text evidence="1">Catalyzes the formation of phosphodiester linkages between 5'-phosphoryl and 3'-hydroxyl groups in double-stranded DNA using NAD as a coenzyme and as the energy source for the reaction.</text>
</comment>
<comment type="catalytic activity">
    <reaction evidence="1">
        <text>NAD(+) + (deoxyribonucleotide)n-3'-hydroxyl + 5'-phospho-(deoxyribonucleotide)m = (deoxyribonucleotide)n+m + AMP + beta-nicotinamide D-nucleotide.</text>
        <dbReference type="EC" id="6.5.1.2"/>
    </reaction>
</comment>
<comment type="similarity">
    <text evidence="1">Belongs to the NAD-dependent DNA ligase family. LigB subfamily.</text>
</comment>
<protein>
    <recommendedName>
        <fullName evidence="1">DNA ligase B</fullName>
        <ecNumber evidence="1">6.5.1.2</ecNumber>
    </recommendedName>
    <alternativeName>
        <fullName evidence="1">Polydeoxyribonucleotide synthase [NAD(+)] B</fullName>
    </alternativeName>
</protein>
<reference key="1">
    <citation type="journal article" date="2009" name="PLoS Genet.">
        <title>Organised genome dynamics in the Escherichia coli species results in highly diverse adaptive paths.</title>
        <authorList>
            <person name="Touchon M."/>
            <person name="Hoede C."/>
            <person name="Tenaillon O."/>
            <person name="Barbe V."/>
            <person name="Baeriswyl S."/>
            <person name="Bidet P."/>
            <person name="Bingen E."/>
            <person name="Bonacorsi S."/>
            <person name="Bouchier C."/>
            <person name="Bouvet O."/>
            <person name="Calteau A."/>
            <person name="Chiapello H."/>
            <person name="Clermont O."/>
            <person name="Cruveiller S."/>
            <person name="Danchin A."/>
            <person name="Diard M."/>
            <person name="Dossat C."/>
            <person name="Karoui M.E."/>
            <person name="Frapy E."/>
            <person name="Garry L."/>
            <person name="Ghigo J.M."/>
            <person name="Gilles A.M."/>
            <person name="Johnson J."/>
            <person name="Le Bouguenec C."/>
            <person name="Lescat M."/>
            <person name="Mangenot S."/>
            <person name="Martinez-Jehanne V."/>
            <person name="Matic I."/>
            <person name="Nassif X."/>
            <person name="Oztas S."/>
            <person name="Petit M.A."/>
            <person name="Pichon C."/>
            <person name="Rouy Z."/>
            <person name="Ruf C.S."/>
            <person name="Schneider D."/>
            <person name="Tourret J."/>
            <person name="Vacherie B."/>
            <person name="Vallenet D."/>
            <person name="Medigue C."/>
            <person name="Rocha E.P.C."/>
            <person name="Denamur E."/>
        </authorList>
    </citation>
    <scope>NUCLEOTIDE SEQUENCE [LARGE SCALE GENOMIC DNA]</scope>
    <source>
        <strain>S88 / ExPEC</strain>
    </source>
</reference>